<keyword id="KW-0150">Chloroplast</keyword>
<keyword id="KW-0472">Membrane</keyword>
<keyword id="KW-0602">Photosynthesis</keyword>
<keyword id="KW-0604">Photosystem II</keyword>
<keyword id="KW-0934">Plastid</keyword>
<keyword id="KW-1185">Reference proteome</keyword>
<keyword id="KW-0793">Thylakoid</keyword>
<keyword id="KW-0812">Transmembrane</keyword>
<keyword id="KW-1133">Transmembrane helix</keyword>
<proteinExistence type="inferred from homology"/>
<geneLocation type="chloroplast"/>
<evidence type="ECO:0000255" key="1">
    <source>
        <dbReference type="HAMAP-Rule" id="MF_00808"/>
    </source>
</evidence>
<sequence length="35" mass="4059">MEALVYTFLLVSTLGIIFFAIFFREPPKVPTKKIK</sequence>
<comment type="function">
    <text evidence="1">Found at the monomer-monomer interface of the photosystem II (PS II) dimer, plays a role in assembly and dimerization of PSII. PSII is a light-driven water plastoquinone oxidoreductase, using light energy to abstract electrons from H(2)O, generating a proton gradient subsequently used for ATP formation.</text>
</comment>
<comment type="subunit">
    <text evidence="1">PSII is composed of 1 copy each of membrane proteins PsbA, PsbB, PsbC, PsbD, PsbE, PsbF, PsbH, PsbI, PsbJ, PsbK, PsbL, PsbM, PsbT, PsbY, PsbZ, Psb30/Ycf12, at least 3 peripheral proteins of the oxygen-evolving complex and a large number of cofactors. It forms dimeric complexes.</text>
</comment>
<comment type="subcellular location">
    <subcellularLocation>
        <location evidence="1">Plastid</location>
        <location evidence="1">Chloroplast thylakoid membrane</location>
        <topology evidence="1">Single-pass membrane protein</topology>
    </subcellularLocation>
</comment>
<comment type="similarity">
    <text evidence="1">Belongs to the PsbT family.</text>
</comment>
<feature type="chain" id="PRO_0000276290" description="Photosystem II reaction center protein T">
    <location>
        <begin position="1"/>
        <end position="35"/>
    </location>
</feature>
<feature type="transmembrane region" description="Helical" evidence="1">
    <location>
        <begin position="3"/>
        <end position="23"/>
    </location>
</feature>
<gene>
    <name evidence="1" type="primary">psbT</name>
</gene>
<protein>
    <recommendedName>
        <fullName evidence="1">Photosystem II reaction center protein T</fullName>
        <shortName evidence="1">PSII-T</shortName>
    </recommendedName>
</protein>
<reference key="1">
    <citation type="journal article" date="2007" name="Plant Biotechnol. J.">
        <title>The complete nucleotide sequence of the coffee (Coffea arabica L.) chloroplast genome: organization and implications for biotechnology and phylogenetic relationships amongst angiosperms.</title>
        <authorList>
            <person name="Samson N."/>
            <person name="Bausher M.G."/>
            <person name="Lee S.-B."/>
            <person name="Jansen R.K."/>
            <person name="Daniell H."/>
        </authorList>
    </citation>
    <scope>NUCLEOTIDE SEQUENCE [LARGE SCALE GENOMIC DNA]</scope>
</reference>
<dbReference type="EMBL" id="EF044213">
    <property type="protein sequence ID" value="ABJ89705.1"/>
    <property type="molecule type" value="Genomic_DNA"/>
</dbReference>
<dbReference type="RefSeq" id="YP_817509.1">
    <property type="nucleotide sequence ID" value="NC_008535.1"/>
</dbReference>
<dbReference type="SMR" id="A0A362"/>
<dbReference type="GeneID" id="4421755"/>
<dbReference type="OrthoDB" id="1558483at2759"/>
<dbReference type="Proteomes" id="UP000515148">
    <property type="component" value="Chloroplast Pltd"/>
</dbReference>
<dbReference type="GO" id="GO:0009535">
    <property type="term" value="C:chloroplast thylakoid membrane"/>
    <property type="evidence" value="ECO:0007669"/>
    <property type="project" value="UniProtKB-SubCell"/>
</dbReference>
<dbReference type="GO" id="GO:0009539">
    <property type="term" value="C:photosystem II reaction center"/>
    <property type="evidence" value="ECO:0007669"/>
    <property type="project" value="InterPro"/>
</dbReference>
<dbReference type="GO" id="GO:0015979">
    <property type="term" value="P:photosynthesis"/>
    <property type="evidence" value="ECO:0007669"/>
    <property type="project" value="UniProtKB-UniRule"/>
</dbReference>
<dbReference type="HAMAP" id="MF_00808">
    <property type="entry name" value="PSII_PsbT"/>
    <property type="match status" value="1"/>
</dbReference>
<dbReference type="InterPro" id="IPR001743">
    <property type="entry name" value="PSII_PsbT"/>
</dbReference>
<dbReference type="InterPro" id="IPR037268">
    <property type="entry name" value="PSII_PsbT_sf"/>
</dbReference>
<dbReference type="PANTHER" id="PTHR36411">
    <property type="match status" value="1"/>
</dbReference>
<dbReference type="PANTHER" id="PTHR36411:SF2">
    <property type="entry name" value="PHOTOSYSTEM II REACTION CENTER PROTEIN T"/>
    <property type="match status" value="1"/>
</dbReference>
<dbReference type="Pfam" id="PF01405">
    <property type="entry name" value="PsbT"/>
    <property type="match status" value="1"/>
</dbReference>
<dbReference type="SUPFAM" id="SSF161029">
    <property type="entry name" value="Photosystem II reaction center protein T, PsbT"/>
    <property type="match status" value="1"/>
</dbReference>
<organism>
    <name type="scientific">Coffea arabica</name>
    <name type="common">Arabian coffee</name>
    <dbReference type="NCBI Taxonomy" id="13443"/>
    <lineage>
        <taxon>Eukaryota</taxon>
        <taxon>Viridiplantae</taxon>
        <taxon>Streptophyta</taxon>
        <taxon>Embryophyta</taxon>
        <taxon>Tracheophyta</taxon>
        <taxon>Spermatophyta</taxon>
        <taxon>Magnoliopsida</taxon>
        <taxon>eudicotyledons</taxon>
        <taxon>Gunneridae</taxon>
        <taxon>Pentapetalae</taxon>
        <taxon>asterids</taxon>
        <taxon>lamiids</taxon>
        <taxon>Gentianales</taxon>
        <taxon>Rubiaceae</taxon>
        <taxon>Ixoroideae</taxon>
        <taxon>Gardenieae complex</taxon>
        <taxon>Bertiereae - Coffeeae clade</taxon>
        <taxon>Coffeeae</taxon>
        <taxon>Coffea</taxon>
    </lineage>
</organism>
<accession>A0A362</accession>
<name>PSBT_COFAR</name>